<comment type="function">
    <text evidence="4">Plays a role in migration and segregation of pigment cells (melanophores and xanthophores). Contributes to pigment stripe patterning in the epidermis.</text>
</comment>
<comment type="subcellular location">
    <subcellularLocation>
        <location evidence="4">Golgi apparatus membrane</location>
        <topology evidence="1">Multi-pass membrane protein</topology>
    </subcellularLocation>
    <subcellularLocation>
        <location evidence="4">Endoplasmic reticulum membrane</location>
        <topology evidence="1">Multi-pass membrane protein</topology>
    </subcellularLocation>
    <text evidence="4">Mainly found in the Golgi apparatus.</text>
</comment>
<comment type="tissue specificity">
    <text evidence="4">Strongly expressed in melanophores and xanthophores. Also detected in eye, brain, heart, skin, fin, testis and ovary.</text>
</comment>
<comment type="PTM">
    <text evidence="4">N-glycosylated.</text>
</comment>
<comment type="similarity">
    <text evidence="1 3">Belongs to the tetraspanin (TM4SF) family.</text>
</comment>
<dbReference type="EMBL" id="AL928845">
    <property type="status" value="NOT_ANNOTATED_CDS"/>
    <property type="molecule type" value="Genomic_DNA"/>
</dbReference>
<dbReference type="EMBL" id="CT956087">
    <property type="status" value="NOT_ANNOTATED_CDS"/>
    <property type="molecule type" value="Genomic_DNA"/>
</dbReference>
<dbReference type="EMBL" id="BC067604">
    <property type="protein sequence ID" value="AAH67604.2"/>
    <property type="molecule type" value="mRNA"/>
</dbReference>
<dbReference type="EMBL" id="BC076407">
    <property type="protein sequence ID" value="AAH76407.1"/>
    <property type="molecule type" value="mRNA"/>
</dbReference>
<dbReference type="RefSeq" id="NP_001002748.1">
    <property type="nucleotide sequence ID" value="NM_001002748.2"/>
</dbReference>
<dbReference type="SMR" id="Q6NWG0"/>
<dbReference type="STRING" id="7955.ENSDARP00000032359"/>
<dbReference type="GlyCosmos" id="Q6NWG0">
    <property type="glycosylation" value="3 sites, No reported glycans"/>
</dbReference>
<dbReference type="PaxDb" id="7955-ENSDARP00000032359"/>
<dbReference type="Ensembl" id="ENSDART00000032498">
    <property type="protein sequence ID" value="ENSDARP00000032359"/>
    <property type="gene ID" value="ENSDARG00000024540"/>
</dbReference>
<dbReference type="Ensembl" id="ENSDART00000189986">
    <property type="protein sequence ID" value="ENSDARP00000151391"/>
    <property type="gene ID" value="ENSDARG00000109488"/>
</dbReference>
<dbReference type="GeneID" id="437021"/>
<dbReference type="KEGG" id="dre:437021"/>
<dbReference type="AGR" id="ZFIN:ZDB-GENE-040718-248"/>
<dbReference type="CTD" id="437021"/>
<dbReference type="ZFIN" id="ZDB-GENE-040718-248">
    <property type="gene designation" value="tspan36"/>
</dbReference>
<dbReference type="eggNOG" id="KOG3882">
    <property type="taxonomic scope" value="Eukaryota"/>
</dbReference>
<dbReference type="HOGENOM" id="CLU_055524_5_2_1"/>
<dbReference type="InParanoid" id="Q6NWG0"/>
<dbReference type="OMA" id="FISFIFW"/>
<dbReference type="OrthoDB" id="9993879at2759"/>
<dbReference type="PhylomeDB" id="Q6NWG0"/>
<dbReference type="TreeFam" id="TF316345"/>
<dbReference type="PRO" id="PR:Q6NWG0"/>
<dbReference type="Proteomes" id="UP000000437">
    <property type="component" value="Alternate scaffold 8"/>
</dbReference>
<dbReference type="Proteomes" id="UP000000437">
    <property type="component" value="Chromosome 8"/>
</dbReference>
<dbReference type="Bgee" id="ENSDARG00000024540">
    <property type="expression patterns" value="Expressed in spleen and 30 other cell types or tissues"/>
</dbReference>
<dbReference type="GO" id="GO:0005789">
    <property type="term" value="C:endoplasmic reticulum membrane"/>
    <property type="evidence" value="ECO:0007669"/>
    <property type="project" value="UniProtKB-SubCell"/>
</dbReference>
<dbReference type="GO" id="GO:0000139">
    <property type="term" value="C:Golgi membrane"/>
    <property type="evidence" value="ECO:0007669"/>
    <property type="project" value="UniProtKB-SubCell"/>
</dbReference>
<dbReference type="GO" id="GO:0005886">
    <property type="term" value="C:plasma membrane"/>
    <property type="evidence" value="ECO:0000318"/>
    <property type="project" value="GO_Central"/>
</dbReference>
<dbReference type="GO" id="GO:0043473">
    <property type="term" value="P:pigmentation"/>
    <property type="evidence" value="ECO:0000315"/>
    <property type="project" value="ZFIN"/>
</dbReference>
<dbReference type="CDD" id="cd03163">
    <property type="entry name" value="TM4SF8_like_LEL"/>
    <property type="match status" value="1"/>
</dbReference>
<dbReference type="FunFam" id="1.10.1450.10:FF:000029">
    <property type="entry name" value="Tetraspanin"/>
    <property type="match status" value="1"/>
</dbReference>
<dbReference type="Gene3D" id="1.10.1450.10">
    <property type="entry name" value="Tetraspanin"/>
    <property type="match status" value="1"/>
</dbReference>
<dbReference type="InterPro" id="IPR018499">
    <property type="entry name" value="Tetraspanin/Peripherin"/>
</dbReference>
<dbReference type="InterPro" id="IPR000301">
    <property type="entry name" value="Tetraspanin_animals"/>
</dbReference>
<dbReference type="InterPro" id="IPR008952">
    <property type="entry name" value="Tetraspanin_EC2_sf"/>
</dbReference>
<dbReference type="PANTHER" id="PTHR19282">
    <property type="entry name" value="TETRASPANIN"/>
    <property type="match status" value="1"/>
</dbReference>
<dbReference type="PANTHER" id="PTHR19282:SF120">
    <property type="entry name" value="TETRASPANIN-36"/>
    <property type="match status" value="1"/>
</dbReference>
<dbReference type="Pfam" id="PF00335">
    <property type="entry name" value="Tetraspanin"/>
    <property type="match status" value="1"/>
</dbReference>
<dbReference type="PIRSF" id="PIRSF002419">
    <property type="entry name" value="Tetraspanin"/>
    <property type="match status" value="1"/>
</dbReference>
<dbReference type="PRINTS" id="PR00259">
    <property type="entry name" value="TMFOUR"/>
</dbReference>
<dbReference type="SUPFAM" id="SSF48652">
    <property type="entry name" value="Tetraspanin"/>
    <property type="match status" value="1"/>
</dbReference>
<keyword id="KW-0217">Developmental protein</keyword>
<keyword id="KW-0256">Endoplasmic reticulum</keyword>
<keyword id="KW-0325">Glycoprotein</keyword>
<keyword id="KW-0333">Golgi apparatus</keyword>
<keyword id="KW-0472">Membrane</keyword>
<keyword id="KW-1185">Reference proteome</keyword>
<keyword id="KW-0812">Transmembrane</keyword>
<keyword id="KW-1133">Transmembrane helix</keyword>
<name>TSN36_DANRE</name>
<proteinExistence type="evidence at protein level"/>
<reference evidence="8" key="1">
    <citation type="journal article" date="2013" name="Nature">
        <title>The zebrafish reference genome sequence and its relationship to the human genome.</title>
        <authorList>
            <person name="Howe K."/>
            <person name="Clark M.D."/>
            <person name="Torroja C.F."/>
            <person name="Torrance J."/>
            <person name="Berthelot C."/>
            <person name="Muffato M."/>
            <person name="Collins J.E."/>
            <person name="Humphray S."/>
            <person name="McLaren K."/>
            <person name="Matthews L."/>
            <person name="McLaren S."/>
            <person name="Sealy I."/>
            <person name="Caccamo M."/>
            <person name="Churcher C."/>
            <person name="Scott C."/>
            <person name="Barrett J.C."/>
            <person name="Koch R."/>
            <person name="Rauch G.J."/>
            <person name="White S."/>
            <person name="Chow W."/>
            <person name="Kilian B."/>
            <person name="Quintais L.T."/>
            <person name="Guerra-Assuncao J.A."/>
            <person name="Zhou Y."/>
            <person name="Gu Y."/>
            <person name="Yen J."/>
            <person name="Vogel J.H."/>
            <person name="Eyre T."/>
            <person name="Redmond S."/>
            <person name="Banerjee R."/>
            <person name="Chi J."/>
            <person name="Fu B."/>
            <person name="Langley E."/>
            <person name="Maguire S.F."/>
            <person name="Laird G.K."/>
            <person name="Lloyd D."/>
            <person name="Kenyon E."/>
            <person name="Donaldson S."/>
            <person name="Sehra H."/>
            <person name="Almeida-King J."/>
            <person name="Loveland J."/>
            <person name="Trevanion S."/>
            <person name="Jones M."/>
            <person name="Quail M."/>
            <person name="Willey D."/>
            <person name="Hunt A."/>
            <person name="Burton J."/>
            <person name="Sims S."/>
            <person name="McLay K."/>
            <person name="Plumb B."/>
            <person name="Davis J."/>
            <person name="Clee C."/>
            <person name="Oliver K."/>
            <person name="Clark R."/>
            <person name="Riddle C."/>
            <person name="Elliot D."/>
            <person name="Threadgold G."/>
            <person name="Harden G."/>
            <person name="Ware D."/>
            <person name="Begum S."/>
            <person name="Mortimore B."/>
            <person name="Kerry G."/>
            <person name="Heath P."/>
            <person name="Phillimore B."/>
            <person name="Tracey A."/>
            <person name="Corby N."/>
            <person name="Dunn M."/>
            <person name="Johnson C."/>
            <person name="Wood J."/>
            <person name="Clark S."/>
            <person name="Pelan S."/>
            <person name="Griffiths G."/>
            <person name="Smith M."/>
            <person name="Glithero R."/>
            <person name="Howden P."/>
            <person name="Barker N."/>
            <person name="Lloyd C."/>
            <person name="Stevens C."/>
            <person name="Harley J."/>
            <person name="Holt K."/>
            <person name="Panagiotidis G."/>
            <person name="Lovell J."/>
            <person name="Beasley H."/>
            <person name="Henderson C."/>
            <person name="Gordon D."/>
            <person name="Auger K."/>
            <person name="Wright D."/>
            <person name="Collins J."/>
            <person name="Raisen C."/>
            <person name="Dyer L."/>
            <person name="Leung K."/>
            <person name="Robertson L."/>
            <person name="Ambridge K."/>
            <person name="Leongamornlert D."/>
            <person name="McGuire S."/>
            <person name="Gilderthorp R."/>
            <person name="Griffiths C."/>
            <person name="Manthravadi D."/>
            <person name="Nichol S."/>
            <person name="Barker G."/>
            <person name="Whitehead S."/>
            <person name="Kay M."/>
            <person name="Brown J."/>
            <person name="Murnane C."/>
            <person name="Gray E."/>
            <person name="Humphries M."/>
            <person name="Sycamore N."/>
            <person name="Barker D."/>
            <person name="Saunders D."/>
            <person name="Wallis J."/>
            <person name="Babbage A."/>
            <person name="Hammond S."/>
            <person name="Mashreghi-Mohammadi M."/>
            <person name="Barr L."/>
            <person name="Martin S."/>
            <person name="Wray P."/>
            <person name="Ellington A."/>
            <person name="Matthews N."/>
            <person name="Ellwood M."/>
            <person name="Woodmansey R."/>
            <person name="Clark G."/>
            <person name="Cooper J."/>
            <person name="Tromans A."/>
            <person name="Grafham D."/>
            <person name="Skuce C."/>
            <person name="Pandian R."/>
            <person name="Andrews R."/>
            <person name="Harrison E."/>
            <person name="Kimberley A."/>
            <person name="Garnett J."/>
            <person name="Fosker N."/>
            <person name="Hall R."/>
            <person name="Garner P."/>
            <person name="Kelly D."/>
            <person name="Bird C."/>
            <person name="Palmer S."/>
            <person name="Gehring I."/>
            <person name="Berger A."/>
            <person name="Dooley C.M."/>
            <person name="Ersan-Urun Z."/>
            <person name="Eser C."/>
            <person name="Geiger H."/>
            <person name="Geisler M."/>
            <person name="Karotki L."/>
            <person name="Kirn A."/>
            <person name="Konantz J."/>
            <person name="Konantz M."/>
            <person name="Oberlander M."/>
            <person name="Rudolph-Geiger S."/>
            <person name="Teucke M."/>
            <person name="Lanz C."/>
            <person name="Raddatz G."/>
            <person name="Osoegawa K."/>
            <person name="Zhu B."/>
            <person name="Rapp A."/>
            <person name="Widaa S."/>
            <person name="Langford C."/>
            <person name="Yang F."/>
            <person name="Schuster S.C."/>
            <person name="Carter N.P."/>
            <person name="Harrow J."/>
            <person name="Ning Z."/>
            <person name="Herrero J."/>
            <person name="Searle S.M."/>
            <person name="Enright A."/>
            <person name="Geisler R."/>
            <person name="Plasterk R.H."/>
            <person name="Lee C."/>
            <person name="Westerfield M."/>
            <person name="de Jong P.J."/>
            <person name="Zon L.I."/>
            <person name="Postlethwait J.H."/>
            <person name="Nusslein-Volhard C."/>
            <person name="Hubbard T.J."/>
            <person name="Roest Crollius H."/>
            <person name="Rogers J."/>
            <person name="Stemple D.L."/>
        </authorList>
    </citation>
    <scope>NUCLEOTIDE SEQUENCE [LARGE SCALE GENOMIC DNA]</scope>
    <source>
        <strain>Tuebingen</strain>
    </source>
</reference>
<reference evidence="7" key="2">
    <citation type="submission" date="2004-07" db="EMBL/GenBank/DDBJ databases">
        <authorList>
            <consortium name="NIH - Zebrafish Gene Collection (ZGC) project"/>
        </authorList>
    </citation>
    <scope>NUCLEOTIDE SEQUENCE [LARGE SCALE MRNA]</scope>
    <source>
        <strain>Singapore</strain>
        <tissue>Kidney</tissue>
    </source>
</reference>
<reference evidence="6" key="3">
    <citation type="journal article" date="2014" name="Pigment Cell Melanoma Res.">
        <title>Tetraspanin 3c requirement for pigment cell interactions and boundary formation in zebrafish adult pigment stripes.</title>
        <authorList>
            <person name="Inoue S."/>
            <person name="Kondo S."/>
            <person name="Parichy D.M."/>
            <person name="Watanabe M."/>
        </authorList>
    </citation>
    <scope>FUNCTION</scope>
    <scope>SUBCELLULAR LOCATION</scope>
    <scope>TISSUE SPECIFICITY</scope>
    <scope>GLYCOSYLATION</scope>
    <scope>MUTAGENESIS OF ILE-18</scope>
</reference>
<evidence type="ECO:0000255" key="1"/>
<evidence type="ECO:0000255" key="2">
    <source>
        <dbReference type="PROSITE-ProRule" id="PRU00498"/>
    </source>
</evidence>
<evidence type="ECO:0000255" key="3">
    <source>
        <dbReference type="RuleBase" id="RU361218"/>
    </source>
</evidence>
<evidence type="ECO:0000269" key="4">
    <source>
    </source>
</evidence>
<evidence type="ECO:0000303" key="5">
    <source>
    </source>
</evidence>
<evidence type="ECO:0000305" key="6"/>
<evidence type="ECO:0000312" key="7">
    <source>
        <dbReference type="EMBL" id="AAH76407.1"/>
    </source>
</evidence>
<evidence type="ECO:0000312" key="8">
    <source>
        <dbReference type="Proteomes" id="UP000000437"/>
    </source>
</evidence>
<evidence type="ECO:0000312" key="9">
    <source>
        <dbReference type="ZFIN" id="ZDB-GENE-040718-248"/>
    </source>
</evidence>
<organism evidence="8">
    <name type="scientific">Danio rerio</name>
    <name type="common">Zebrafish</name>
    <name type="synonym">Brachydanio rerio</name>
    <dbReference type="NCBI Taxonomy" id="7955"/>
    <lineage>
        <taxon>Eukaryota</taxon>
        <taxon>Metazoa</taxon>
        <taxon>Chordata</taxon>
        <taxon>Craniata</taxon>
        <taxon>Vertebrata</taxon>
        <taxon>Euteleostomi</taxon>
        <taxon>Actinopterygii</taxon>
        <taxon>Neopterygii</taxon>
        <taxon>Teleostei</taxon>
        <taxon>Ostariophysi</taxon>
        <taxon>Cypriniformes</taxon>
        <taxon>Danionidae</taxon>
        <taxon>Danioninae</taxon>
        <taxon>Danio</taxon>
    </lineage>
</organism>
<protein>
    <recommendedName>
        <fullName evidence="9">Tetraspanin-36</fullName>
    </recommendedName>
    <alternativeName>
        <fullName evidence="5">Tetraspanin-3c</fullName>
    </alternativeName>
</protein>
<sequence>MDCGIITSKTILLLLSLIFWAAGAALAYVGSYVIKSYNNFEDFMSDRHTLIPAAIIIGVAVVMFIIGFVGCCATLRESKVGLGLFLIIIMLIFAAEVTAFVFGIIYRGRIRGDLEKSMNDVFLKYDGLNSETHAVDYLQSQLECCGVKNQTDWTLTSWFAQHNNTVPQSCCKANMTQCTGQLSQPDLLNTQGCEAKLEQVLQDVLSYAMLVILGFAIIKFFGMLSVCVITCKSKKNEYQPLYA</sequence>
<feature type="chain" id="PRO_0000442536" description="Tetraspanin-36">
    <location>
        <begin position="1"/>
        <end position="243"/>
    </location>
</feature>
<feature type="topological domain" description="Cytoplasmic" evidence="6">
    <location>
        <begin position="1"/>
        <end position="9"/>
    </location>
</feature>
<feature type="transmembrane region" description="Helical" evidence="1">
    <location>
        <begin position="10"/>
        <end position="30"/>
    </location>
</feature>
<feature type="topological domain" description="Lumenal" evidence="6">
    <location>
        <begin position="31"/>
        <end position="49"/>
    </location>
</feature>
<feature type="transmembrane region" description="Helical" evidence="1">
    <location>
        <begin position="50"/>
        <end position="70"/>
    </location>
</feature>
<feature type="topological domain" description="Cytoplasmic" evidence="6">
    <location>
        <begin position="71"/>
        <end position="84"/>
    </location>
</feature>
<feature type="transmembrane region" description="Helical" evidence="1">
    <location>
        <begin position="85"/>
        <end position="105"/>
    </location>
</feature>
<feature type="topological domain" description="Lumenal" evidence="6">
    <location>
        <begin position="106"/>
        <end position="208"/>
    </location>
</feature>
<feature type="transmembrane region" description="Helical" evidence="1">
    <location>
        <begin position="209"/>
        <end position="229"/>
    </location>
</feature>
<feature type="topological domain" description="Cytoplasmic" evidence="6">
    <location>
        <begin position="230"/>
        <end position="243"/>
    </location>
</feature>
<feature type="glycosylation site" description="N-linked (GlcNAc...) asparagine" evidence="2">
    <location>
        <position position="149"/>
    </location>
</feature>
<feature type="glycosylation site" description="N-linked (GlcNAc...) asparagine" evidence="2">
    <location>
        <position position="163"/>
    </location>
</feature>
<feature type="glycosylation site" description="N-linked (GlcNAc...) asparagine" evidence="2">
    <location>
        <position position="174"/>
    </location>
</feature>
<feature type="mutagenesis site" description="In dali; retained in the endoplasmic reticulum. Incomplete N-glycosylation. Defective migration and cell-cell interaction between melanophores and xanthophores, leading to abnormal pigment stripe patterning." evidence="4">
    <original>I</original>
    <variation>R</variation>
    <location>
        <position position="18"/>
    </location>
</feature>
<accession>Q6NWG0</accession>
<accession>Q6DGE3</accession>
<gene>
    <name evidence="9" type="primary">tspan36</name>
    <name evidence="5" type="synonym">tspan3c</name>
</gene>